<protein>
    <recommendedName>
        <fullName evidence="1">Nucleoside diphosphate kinase</fullName>
        <shortName evidence="1">NDK</shortName>
        <shortName evidence="1">NDP kinase</shortName>
        <ecNumber evidence="1">2.7.4.6</ecNumber>
    </recommendedName>
    <alternativeName>
        <fullName evidence="1">Nucleoside-2-P kinase</fullName>
    </alternativeName>
</protein>
<sequence>METTLAIVKPDGVKRGLIGEILKRYENKGLRLKAAKVITPTIELLEKHYEEHKGKPYYKPLIQYMSSGPVFAMVLEGENAVKIVRLLNGATKVEEALPGTIRGDFAISTTFNIIHGSDSIESAKREIALWFPELA</sequence>
<dbReference type="EC" id="2.7.4.6" evidence="1"/>
<dbReference type="EMBL" id="CP000923">
    <property type="protein sequence ID" value="ABY93497.1"/>
    <property type="molecule type" value="Genomic_DNA"/>
</dbReference>
<dbReference type="RefSeq" id="WP_003867735.1">
    <property type="nucleotide sequence ID" value="NC_010320.1"/>
</dbReference>
<dbReference type="SMR" id="B0K4M4"/>
<dbReference type="KEGG" id="tex:Teth514_2228"/>
<dbReference type="HOGENOM" id="CLU_060216_6_3_9"/>
<dbReference type="Proteomes" id="UP000002155">
    <property type="component" value="Chromosome"/>
</dbReference>
<dbReference type="GO" id="GO:0005737">
    <property type="term" value="C:cytoplasm"/>
    <property type="evidence" value="ECO:0007669"/>
    <property type="project" value="UniProtKB-SubCell"/>
</dbReference>
<dbReference type="GO" id="GO:0005524">
    <property type="term" value="F:ATP binding"/>
    <property type="evidence" value="ECO:0007669"/>
    <property type="project" value="UniProtKB-UniRule"/>
</dbReference>
<dbReference type="GO" id="GO:0046872">
    <property type="term" value="F:metal ion binding"/>
    <property type="evidence" value="ECO:0007669"/>
    <property type="project" value="UniProtKB-KW"/>
</dbReference>
<dbReference type="GO" id="GO:0004550">
    <property type="term" value="F:nucleoside diphosphate kinase activity"/>
    <property type="evidence" value="ECO:0007669"/>
    <property type="project" value="UniProtKB-UniRule"/>
</dbReference>
<dbReference type="GO" id="GO:0006241">
    <property type="term" value="P:CTP biosynthetic process"/>
    <property type="evidence" value="ECO:0007669"/>
    <property type="project" value="UniProtKB-UniRule"/>
</dbReference>
<dbReference type="GO" id="GO:0006183">
    <property type="term" value="P:GTP biosynthetic process"/>
    <property type="evidence" value="ECO:0007669"/>
    <property type="project" value="UniProtKB-UniRule"/>
</dbReference>
<dbReference type="GO" id="GO:0006228">
    <property type="term" value="P:UTP biosynthetic process"/>
    <property type="evidence" value="ECO:0007669"/>
    <property type="project" value="UniProtKB-UniRule"/>
</dbReference>
<dbReference type="CDD" id="cd04413">
    <property type="entry name" value="NDPk_I"/>
    <property type="match status" value="1"/>
</dbReference>
<dbReference type="FunFam" id="3.30.70.141:FF:000003">
    <property type="entry name" value="Nucleoside diphosphate kinase"/>
    <property type="match status" value="1"/>
</dbReference>
<dbReference type="Gene3D" id="3.30.70.141">
    <property type="entry name" value="Nucleoside diphosphate kinase-like domain"/>
    <property type="match status" value="1"/>
</dbReference>
<dbReference type="HAMAP" id="MF_00451">
    <property type="entry name" value="NDP_kinase"/>
    <property type="match status" value="1"/>
</dbReference>
<dbReference type="InterPro" id="IPR034907">
    <property type="entry name" value="NDK-like_dom"/>
</dbReference>
<dbReference type="InterPro" id="IPR036850">
    <property type="entry name" value="NDK-like_dom_sf"/>
</dbReference>
<dbReference type="InterPro" id="IPR001564">
    <property type="entry name" value="Nucleoside_diP_kinase"/>
</dbReference>
<dbReference type="InterPro" id="IPR023005">
    <property type="entry name" value="Nucleoside_diP_kinase_AS"/>
</dbReference>
<dbReference type="NCBIfam" id="NF001908">
    <property type="entry name" value="PRK00668.1"/>
    <property type="match status" value="1"/>
</dbReference>
<dbReference type="PANTHER" id="PTHR11349">
    <property type="entry name" value="NUCLEOSIDE DIPHOSPHATE KINASE"/>
    <property type="match status" value="1"/>
</dbReference>
<dbReference type="Pfam" id="PF00334">
    <property type="entry name" value="NDK"/>
    <property type="match status" value="1"/>
</dbReference>
<dbReference type="PRINTS" id="PR01243">
    <property type="entry name" value="NUCDPKINASE"/>
</dbReference>
<dbReference type="SMART" id="SM00562">
    <property type="entry name" value="NDK"/>
    <property type="match status" value="1"/>
</dbReference>
<dbReference type="SUPFAM" id="SSF54919">
    <property type="entry name" value="Nucleoside diphosphate kinase, NDK"/>
    <property type="match status" value="1"/>
</dbReference>
<dbReference type="PROSITE" id="PS00469">
    <property type="entry name" value="NDPK"/>
    <property type="match status" value="1"/>
</dbReference>
<dbReference type="PROSITE" id="PS51374">
    <property type="entry name" value="NDPK_LIKE"/>
    <property type="match status" value="1"/>
</dbReference>
<gene>
    <name evidence="1" type="primary">ndk</name>
    <name type="ordered locus">Teth514_2228</name>
</gene>
<evidence type="ECO:0000255" key="1">
    <source>
        <dbReference type="HAMAP-Rule" id="MF_00451"/>
    </source>
</evidence>
<accession>B0K4M4</accession>
<comment type="function">
    <text evidence="1">Major role in the synthesis of nucleoside triphosphates other than ATP. The ATP gamma phosphate is transferred to the NDP beta phosphate via a ping-pong mechanism, using a phosphorylated active-site intermediate.</text>
</comment>
<comment type="catalytic activity">
    <reaction evidence="1">
        <text>a 2'-deoxyribonucleoside 5'-diphosphate + ATP = a 2'-deoxyribonucleoside 5'-triphosphate + ADP</text>
        <dbReference type="Rhea" id="RHEA:44640"/>
        <dbReference type="ChEBI" id="CHEBI:30616"/>
        <dbReference type="ChEBI" id="CHEBI:61560"/>
        <dbReference type="ChEBI" id="CHEBI:73316"/>
        <dbReference type="ChEBI" id="CHEBI:456216"/>
        <dbReference type="EC" id="2.7.4.6"/>
    </reaction>
</comment>
<comment type="catalytic activity">
    <reaction evidence="1">
        <text>a ribonucleoside 5'-diphosphate + ATP = a ribonucleoside 5'-triphosphate + ADP</text>
        <dbReference type="Rhea" id="RHEA:18113"/>
        <dbReference type="ChEBI" id="CHEBI:30616"/>
        <dbReference type="ChEBI" id="CHEBI:57930"/>
        <dbReference type="ChEBI" id="CHEBI:61557"/>
        <dbReference type="ChEBI" id="CHEBI:456216"/>
        <dbReference type="EC" id="2.7.4.6"/>
    </reaction>
</comment>
<comment type="cofactor">
    <cofactor evidence="1">
        <name>Mg(2+)</name>
        <dbReference type="ChEBI" id="CHEBI:18420"/>
    </cofactor>
</comment>
<comment type="subunit">
    <text evidence="1">Homotetramer.</text>
</comment>
<comment type="subcellular location">
    <subcellularLocation>
        <location evidence="1">Cytoplasm</location>
    </subcellularLocation>
</comment>
<comment type="similarity">
    <text evidence="1">Belongs to the NDK family.</text>
</comment>
<organism>
    <name type="scientific">Thermoanaerobacter sp. (strain X514)</name>
    <dbReference type="NCBI Taxonomy" id="399726"/>
    <lineage>
        <taxon>Bacteria</taxon>
        <taxon>Bacillati</taxon>
        <taxon>Bacillota</taxon>
        <taxon>Clostridia</taxon>
        <taxon>Thermoanaerobacterales</taxon>
        <taxon>Thermoanaerobacteraceae</taxon>
        <taxon>Thermoanaerobacter</taxon>
    </lineage>
</organism>
<name>NDK_THEPX</name>
<reference key="1">
    <citation type="submission" date="2008-01" db="EMBL/GenBank/DDBJ databases">
        <title>Complete sequence of Thermoanaerobacter sp. X514.</title>
        <authorList>
            <consortium name="US DOE Joint Genome Institute"/>
            <person name="Copeland A."/>
            <person name="Lucas S."/>
            <person name="Lapidus A."/>
            <person name="Barry K."/>
            <person name="Glavina del Rio T."/>
            <person name="Dalin E."/>
            <person name="Tice H."/>
            <person name="Pitluck S."/>
            <person name="Bruce D."/>
            <person name="Goodwin L."/>
            <person name="Saunders E."/>
            <person name="Brettin T."/>
            <person name="Detter J.C."/>
            <person name="Han C."/>
            <person name="Schmutz J."/>
            <person name="Larimer F."/>
            <person name="Land M."/>
            <person name="Hauser L."/>
            <person name="Kyrpides N."/>
            <person name="Kim E."/>
            <person name="Hemme C."/>
            <person name="Fields M.W."/>
            <person name="He Z."/>
            <person name="Zhou J."/>
            <person name="Richardson P."/>
        </authorList>
    </citation>
    <scope>NUCLEOTIDE SEQUENCE [LARGE SCALE GENOMIC DNA]</scope>
    <source>
        <strain>X514</strain>
    </source>
</reference>
<feature type="chain" id="PRO_1000192297" description="Nucleoside diphosphate kinase">
    <location>
        <begin position="1"/>
        <end position="135"/>
    </location>
</feature>
<feature type="active site" description="Pros-phosphohistidine intermediate" evidence="1">
    <location>
        <position position="115"/>
    </location>
</feature>
<feature type="binding site" evidence="1">
    <location>
        <position position="9"/>
    </location>
    <ligand>
        <name>ATP</name>
        <dbReference type="ChEBI" id="CHEBI:30616"/>
    </ligand>
</feature>
<feature type="binding site" evidence="1">
    <location>
        <position position="57"/>
    </location>
    <ligand>
        <name>ATP</name>
        <dbReference type="ChEBI" id="CHEBI:30616"/>
    </ligand>
</feature>
<feature type="binding site" evidence="1">
    <location>
        <position position="85"/>
    </location>
    <ligand>
        <name>ATP</name>
        <dbReference type="ChEBI" id="CHEBI:30616"/>
    </ligand>
</feature>
<feature type="binding site" evidence="1">
    <location>
        <position position="91"/>
    </location>
    <ligand>
        <name>ATP</name>
        <dbReference type="ChEBI" id="CHEBI:30616"/>
    </ligand>
</feature>
<feature type="binding site" evidence="1">
    <location>
        <position position="102"/>
    </location>
    <ligand>
        <name>ATP</name>
        <dbReference type="ChEBI" id="CHEBI:30616"/>
    </ligand>
</feature>
<feature type="binding site" evidence="1">
    <location>
        <position position="112"/>
    </location>
    <ligand>
        <name>ATP</name>
        <dbReference type="ChEBI" id="CHEBI:30616"/>
    </ligand>
</feature>
<keyword id="KW-0067">ATP-binding</keyword>
<keyword id="KW-0963">Cytoplasm</keyword>
<keyword id="KW-0418">Kinase</keyword>
<keyword id="KW-0460">Magnesium</keyword>
<keyword id="KW-0479">Metal-binding</keyword>
<keyword id="KW-0546">Nucleotide metabolism</keyword>
<keyword id="KW-0547">Nucleotide-binding</keyword>
<keyword id="KW-0597">Phosphoprotein</keyword>
<keyword id="KW-0808">Transferase</keyword>
<proteinExistence type="inferred from homology"/>